<sequence length="275" mass="31136">MENTENSVDSKSIKTSETKILHGSKSMDSGISLEESYKMDYPEMGLCIIINNKNFHENTGMACRSGTDVDAANLRETFMNLKYEVRIKNDLTCKEMLELMSNVSKEDHSKRSSFICVLLSHGEEGIIFGTNGPVNLKKLASFFRGDYCRSLTGKPKLFIIQACRGTELDCGIETDSGAEDDMACQKIPVEADFLYAYSTAPGYFSWRNAKNGSWFIQALCEMLKKHAHRLELMHILTRVNRKVAIEYESFSTDSAFHAKKQIPCIMSMLTKELYF</sequence>
<organism>
    <name type="scientific">Bos taurus</name>
    <name type="common">Bovine</name>
    <dbReference type="NCBI Taxonomy" id="9913"/>
    <lineage>
        <taxon>Eukaryota</taxon>
        <taxon>Metazoa</taxon>
        <taxon>Chordata</taxon>
        <taxon>Craniata</taxon>
        <taxon>Vertebrata</taxon>
        <taxon>Euteleostomi</taxon>
        <taxon>Mammalia</taxon>
        <taxon>Eutheria</taxon>
        <taxon>Laurasiatheria</taxon>
        <taxon>Artiodactyla</taxon>
        <taxon>Ruminantia</taxon>
        <taxon>Pecora</taxon>
        <taxon>Bovidae</taxon>
        <taxon>Bovinae</taxon>
        <taxon>Bos</taxon>
    </lineage>
</organism>
<evidence type="ECO:0000250" key="1">
    <source>
        <dbReference type="UniProtKB" id="P29466"/>
    </source>
</evidence>
<evidence type="ECO:0000250" key="2">
    <source>
        <dbReference type="UniProtKB" id="P42574"/>
    </source>
</evidence>
<evidence type="ECO:0000250" key="3">
    <source>
        <dbReference type="UniProtKB" id="P70677"/>
    </source>
</evidence>
<evidence type="ECO:0000250" key="4">
    <source>
        <dbReference type="UniProtKB" id="Q60431"/>
    </source>
</evidence>
<evidence type="ECO:0000305" key="5"/>
<protein>
    <recommendedName>
        <fullName>Caspase-3</fullName>
        <shortName>CASP-3</shortName>
        <ecNumber evidence="2">3.4.22.56</ecNumber>
    </recommendedName>
    <component>
        <recommendedName>
            <fullName>Caspase-3 subunit p17</fullName>
        </recommendedName>
    </component>
    <component>
        <recommendedName>
            <fullName>Caspase-3 subunit p12</fullName>
        </recommendedName>
    </component>
</protein>
<keyword id="KW-0007">Acetylation</keyword>
<keyword id="KW-0053">Apoptosis</keyword>
<keyword id="KW-0963">Cytoplasm</keyword>
<keyword id="KW-0378">Hydrolase</keyword>
<keyword id="KW-0597">Phosphoprotein</keyword>
<keyword id="KW-0645">Protease</keyword>
<keyword id="KW-1185">Reference proteome</keyword>
<keyword id="KW-0702">S-nitrosylation</keyword>
<keyword id="KW-0788">Thiol protease</keyword>
<keyword id="KW-0832">Ubl conjugation</keyword>
<keyword id="KW-0865">Zymogen</keyword>
<reference key="1">
    <citation type="submission" date="2006-09" db="EMBL/GenBank/DDBJ databases">
        <authorList>
            <consortium name="NIH - Mammalian Gene Collection (MGC) project"/>
        </authorList>
    </citation>
    <scope>NUCLEOTIDE SEQUENCE [LARGE SCALE MRNA]</scope>
    <source>
        <strain>Hereford</strain>
        <tissue>Brain cortex</tissue>
    </source>
</reference>
<accession>Q08DY9</accession>
<gene>
    <name type="primary">CASP3</name>
</gene>
<comment type="function">
    <text evidence="2 3 4">Involved in the activation cascade of caspases responsible for apoptosis execution. At the onset of apoptosis, it proteolytically cleaves poly(ADP-ribose) polymerase PARP1 at a '216-Asp-|-Gly-217' bond. Cleaves and activates sterol regulatory element binding proteins (SREBPs) between the basic helix-loop-helix leucine zipper domain and the membrane attachment domain. Cleaves and activates caspase-6, -7 and -9 (CASP6, CASP7 and CASP9, respectively). Cleaves and inactivates interleukin-18 (IL18) (By similarity). Triggers cell adhesion in sympathetic neurons through RET cleavage (By similarity). Cleaves IL-1 beta between an Asp and an Ala, releasing the mature cytokine which is involved in a variety of inflammatory processes (By similarity). Cleaves and inhibits serine/threonine-protein kinase AKT1 in response to oxidative stress. Acts as an inhibitor of type I interferon production during virus-induced apoptosis by mediating cleavage of antiviral proteins CGAS, IRF3 and MAVS, thereby preventing cytokine overproduction. Also involved in pyroptosis by mediating cleavage and activation of gasdermin-E (GSDME) (By similarity). Cleaves XRCC4 and phospholipid scramblase proteins XKR4, XKR8 and XKR9, leading to promote phosphatidylserine exposure on apoptotic cell surface (By similarity). Cleaves BIRC6 following inhibition of BIRC6-caspase binding by DIABLO/SMAC (By similarity).</text>
</comment>
<comment type="catalytic activity">
    <reaction evidence="2">
        <text>Strict requirement for an Asp residue at positions P1 and P4. It has a preferred cleavage sequence of Asp-Xaa-Xaa-Asp-|- with a hydrophobic amino-acid residue at P2 and a hydrophilic amino-acid residue at P3, although Val or Ala are also accepted at this position.</text>
        <dbReference type="EC" id="3.4.22.56"/>
    </reaction>
</comment>
<comment type="activity regulation">
    <text evidence="2">Inhibited by BIRC6; following inhibition of BIRC6-caspase binding by DIABLO/SMAC, BIRC6 is subjected to caspase cleavage, leading to an increase in active caspases.</text>
</comment>
<comment type="subunit">
    <text evidence="2">Heterotetramer that consists of two anti-parallel arranged heterodimers, each one formed by a 17 kDa (p17) and a 12 kDa (p12) subunit. Interacts with BIRC6/bruce.</text>
</comment>
<comment type="subcellular location">
    <subcellularLocation>
        <location evidence="2">Cytoplasm</location>
    </subcellularLocation>
</comment>
<comment type="PTM">
    <text evidence="2">Cleavage by granzyme B, caspase-6, caspase-8 and caspase-10 generates the two active subunits. Additional processing of the propeptides is likely due to the autocatalytic activity of the activated protease. Active heterodimers between the small subunit of caspase-7 protease and the large subunit of caspase-3 also occur and vice versa.</text>
</comment>
<comment type="PTM">
    <text evidence="2">S-nitrosylated on its catalytic site cysteine in unstimulated cell lines and denitrosylated upon activation of the Fas apoptotic pathway, associated with an increase in intracellular caspase activity. Fas therefore activates caspase-3 not only by inducing the cleavage of the caspase zymogen to its active subunits, but also by stimulating the denitrosylation of its active site thiol.</text>
</comment>
<comment type="PTM">
    <text evidence="2">Ubiquitinated by BIRC6; this activity is inhibited by DIABLO/SMAC.</text>
</comment>
<comment type="similarity">
    <text evidence="5">Belongs to the peptidase C14A family.</text>
</comment>
<proteinExistence type="evidence at transcript level"/>
<name>CASP3_BOVIN</name>
<dbReference type="EC" id="3.4.22.56" evidence="2"/>
<dbReference type="EMBL" id="BC123503">
    <property type="protein sequence ID" value="AAI23504.1"/>
    <property type="molecule type" value="mRNA"/>
</dbReference>
<dbReference type="RefSeq" id="NP_001071308.1">
    <property type="nucleotide sequence ID" value="NM_001077840.1"/>
</dbReference>
<dbReference type="SMR" id="Q08DY9"/>
<dbReference type="FunCoup" id="Q08DY9">
    <property type="interactions" value="1594"/>
</dbReference>
<dbReference type="STRING" id="9913.ENSBTAP00000021099"/>
<dbReference type="MEROPS" id="C14.003"/>
<dbReference type="PaxDb" id="9913-ENSBTAP00000021099"/>
<dbReference type="GeneID" id="408016"/>
<dbReference type="KEGG" id="bta:408016"/>
<dbReference type="CTD" id="836"/>
<dbReference type="eggNOG" id="KOG3573">
    <property type="taxonomic scope" value="Eukaryota"/>
</dbReference>
<dbReference type="InParanoid" id="Q08DY9"/>
<dbReference type="OrthoDB" id="6116485at2759"/>
<dbReference type="Proteomes" id="UP000009136">
    <property type="component" value="Unplaced"/>
</dbReference>
<dbReference type="GO" id="GO:0005737">
    <property type="term" value="C:cytoplasm"/>
    <property type="evidence" value="ECO:0000318"/>
    <property type="project" value="GO_Central"/>
</dbReference>
<dbReference type="GO" id="GO:0031264">
    <property type="term" value="C:death-inducing signaling complex"/>
    <property type="evidence" value="ECO:0000318"/>
    <property type="project" value="GO_Central"/>
</dbReference>
<dbReference type="GO" id="GO:0004197">
    <property type="term" value="F:cysteine-type endopeptidase activity"/>
    <property type="evidence" value="ECO:0000250"/>
    <property type="project" value="UniProtKB"/>
</dbReference>
<dbReference type="GO" id="GO:0004175">
    <property type="term" value="F:endopeptidase activity"/>
    <property type="evidence" value="ECO:0000250"/>
    <property type="project" value="UniProtKB"/>
</dbReference>
<dbReference type="GO" id="GO:0008047">
    <property type="term" value="F:enzyme activator activity"/>
    <property type="evidence" value="ECO:0000318"/>
    <property type="project" value="GO_Central"/>
</dbReference>
<dbReference type="GO" id="GO:0006915">
    <property type="term" value="P:apoptotic process"/>
    <property type="evidence" value="ECO:0000318"/>
    <property type="project" value="GO_Central"/>
</dbReference>
<dbReference type="GO" id="GO:0030218">
    <property type="term" value="P:erythrocyte differentiation"/>
    <property type="evidence" value="ECO:0000318"/>
    <property type="project" value="GO_Central"/>
</dbReference>
<dbReference type="GO" id="GO:0097194">
    <property type="term" value="P:execution phase of apoptosis"/>
    <property type="evidence" value="ECO:0000318"/>
    <property type="project" value="GO_Central"/>
</dbReference>
<dbReference type="GO" id="GO:0030216">
    <property type="term" value="P:keratinocyte differentiation"/>
    <property type="evidence" value="ECO:0000318"/>
    <property type="project" value="GO_Central"/>
</dbReference>
<dbReference type="GO" id="GO:0030182">
    <property type="term" value="P:neuron differentiation"/>
    <property type="evidence" value="ECO:0000318"/>
    <property type="project" value="GO_Central"/>
</dbReference>
<dbReference type="GO" id="GO:1902004">
    <property type="term" value="P:positive regulation of amyloid-beta formation"/>
    <property type="evidence" value="ECO:0000250"/>
    <property type="project" value="UniProtKB"/>
</dbReference>
<dbReference type="GO" id="GO:0043525">
    <property type="term" value="P:positive regulation of neuron apoptotic process"/>
    <property type="evidence" value="ECO:0000318"/>
    <property type="project" value="GO_Central"/>
</dbReference>
<dbReference type="GO" id="GO:0006508">
    <property type="term" value="P:proteolysis"/>
    <property type="evidence" value="ECO:0000250"/>
    <property type="project" value="UniProtKB"/>
</dbReference>
<dbReference type="GO" id="GO:0031647">
    <property type="term" value="P:regulation of protein stability"/>
    <property type="evidence" value="ECO:0000250"/>
    <property type="project" value="UniProtKB"/>
</dbReference>
<dbReference type="CDD" id="cd00032">
    <property type="entry name" value="CASc"/>
    <property type="match status" value="1"/>
</dbReference>
<dbReference type="FunFam" id="3.30.70.1470:FF:000002">
    <property type="entry name" value="Caspase-3"/>
    <property type="match status" value="1"/>
</dbReference>
<dbReference type="FunFam" id="3.40.50.1460:FF:000001">
    <property type="entry name" value="Caspase-3 preproprotein"/>
    <property type="match status" value="1"/>
</dbReference>
<dbReference type="Gene3D" id="3.40.50.1460">
    <property type="match status" value="1"/>
</dbReference>
<dbReference type="Gene3D" id="3.30.70.1470">
    <property type="entry name" value="Caspase-like"/>
    <property type="match status" value="1"/>
</dbReference>
<dbReference type="InterPro" id="IPR029030">
    <property type="entry name" value="Caspase-like_dom_sf"/>
</dbReference>
<dbReference type="InterPro" id="IPR033139">
    <property type="entry name" value="Caspase_cys_AS"/>
</dbReference>
<dbReference type="InterPro" id="IPR016129">
    <property type="entry name" value="Caspase_his_AS"/>
</dbReference>
<dbReference type="InterPro" id="IPR002398">
    <property type="entry name" value="Pept_C14"/>
</dbReference>
<dbReference type="InterPro" id="IPR011600">
    <property type="entry name" value="Pept_C14_caspase"/>
</dbReference>
<dbReference type="InterPro" id="IPR002138">
    <property type="entry name" value="Pept_C14_p10"/>
</dbReference>
<dbReference type="InterPro" id="IPR001309">
    <property type="entry name" value="Pept_C14_p20"/>
</dbReference>
<dbReference type="InterPro" id="IPR015917">
    <property type="entry name" value="Pept_C14A"/>
</dbReference>
<dbReference type="PANTHER" id="PTHR10454">
    <property type="entry name" value="CASPASE"/>
    <property type="match status" value="1"/>
</dbReference>
<dbReference type="PANTHER" id="PTHR10454:SF198">
    <property type="entry name" value="CASPASE-3"/>
    <property type="match status" value="1"/>
</dbReference>
<dbReference type="Pfam" id="PF00656">
    <property type="entry name" value="Peptidase_C14"/>
    <property type="match status" value="1"/>
</dbReference>
<dbReference type="PRINTS" id="PR00376">
    <property type="entry name" value="IL1BCENZYME"/>
</dbReference>
<dbReference type="SMART" id="SM00115">
    <property type="entry name" value="CASc"/>
    <property type="match status" value="1"/>
</dbReference>
<dbReference type="SUPFAM" id="SSF52129">
    <property type="entry name" value="Caspase-like"/>
    <property type="match status" value="1"/>
</dbReference>
<dbReference type="PROSITE" id="PS01122">
    <property type="entry name" value="CASPASE_CYS"/>
    <property type="match status" value="1"/>
</dbReference>
<dbReference type="PROSITE" id="PS01121">
    <property type="entry name" value="CASPASE_HIS"/>
    <property type="match status" value="1"/>
</dbReference>
<dbReference type="PROSITE" id="PS50207">
    <property type="entry name" value="CASPASE_P10"/>
    <property type="match status" value="1"/>
</dbReference>
<dbReference type="PROSITE" id="PS50208">
    <property type="entry name" value="CASPASE_P20"/>
    <property type="match status" value="1"/>
</dbReference>
<feature type="propeptide" id="PRO_0000261328" evidence="2">
    <location>
        <begin position="1"/>
        <end position="9"/>
    </location>
</feature>
<feature type="propeptide" id="PRO_0000261329" evidence="2">
    <location>
        <begin position="10"/>
        <end position="28"/>
    </location>
</feature>
<feature type="chain" id="PRO_0000261330" description="Caspase-3 subunit p17" evidence="2">
    <location>
        <begin position="29"/>
        <end position="175"/>
    </location>
</feature>
<feature type="chain" id="PRO_0000261331" description="Caspase-3 subunit p12" evidence="2">
    <location>
        <begin position="176"/>
        <end position="275"/>
    </location>
</feature>
<feature type="active site" evidence="1">
    <location>
        <position position="121"/>
    </location>
</feature>
<feature type="active site" evidence="1">
    <location>
        <position position="163"/>
    </location>
</feature>
<feature type="modified residue" description="N-acetylmethionine" evidence="2">
    <location>
        <position position="1"/>
    </location>
</feature>
<feature type="modified residue" description="N6-acetyllysine" evidence="3">
    <location>
        <position position="11"/>
    </location>
</feature>
<feature type="modified residue" description="Phosphoserine" evidence="2">
    <location>
        <position position="26"/>
    </location>
</feature>
<feature type="modified residue" description="S-nitrosocysteine; in inhibited form" evidence="2">
    <location>
        <position position="163"/>
    </location>
</feature>